<gene>
    <name evidence="1" type="primary">miaB</name>
    <name type="ordered locus">HCH_05348</name>
</gene>
<feature type="chain" id="PRO_0000374333" description="tRNA-2-methylthio-N(6)-dimethylallyladenosine synthase">
    <location>
        <begin position="1"/>
        <end position="446"/>
    </location>
</feature>
<feature type="domain" description="MTTase N-terminal" evidence="1">
    <location>
        <begin position="3"/>
        <end position="120"/>
    </location>
</feature>
<feature type="domain" description="Radical SAM core" evidence="2">
    <location>
        <begin position="143"/>
        <end position="375"/>
    </location>
</feature>
<feature type="domain" description="TRAM" evidence="1">
    <location>
        <begin position="378"/>
        <end position="442"/>
    </location>
</feature>
<feature type="binding site" evidence="1">
    <location>
        <position position="12"/>
    </location>
    <ligand>
        <name>[4Fe-4S] cluster</name>
        <dbReference type="ChEBI" id="CHEBI:49883"/>
        <label>1</label>
    </ligand>
</feature>
<feature type="binding site" evidence="1">
    <location>
        <position position="49"/>
    </location>
    <ligand>
        <name>[4Fe-4S] cluster</name>
        <dbReference type="ChEBI" id="CHEBI:49883"/>
        <label>1</label>
    </ligand>
</feature>
<feature type="binding site" evidence="1">
    <location>
        <position position="83"/>
    </location>
    <ligand>
        <name>[4Fe-4S] cluster</name>
        <dbReference type="ChEBI" id="CHEBI:49883"/>
        <label>1</label>
    </ligand>
</feature>
<feature type="binding site" evidence="1">
    <location>
        <position position="157"/>
    </location>
    <ligand>
        <name>[4Fe-4S] cluster</name>
        <dbReference type="ChEBI" id="CHEBI:49883"/>
        <label>2</label>
        <note>4Fe-4S-S-AdoMet</note>
    </ligand>
</feature>
<feature type="binding site" evidence="1">
    <location>
        <position position="161"/>
    </location>
    <ligand>
        <name>[4Fe-4S] cluster</name>
        <dbReference type="ChEBI" id="CHEBI:49883"/>
        <label>2</label>
        <note>4Fe-4S-S-AdoMet</note>
    </ligand>
</feature>
<feature type="binding site" evidence="1">
    <location>
        <position position="164"/>
    </location>
    <ligand>
        <name>[4Fe-4S] cluster</name>
        <dbReference type="ChEBI" id="CHEBI:49883"/>
        <label>2</label>
        <note>4Fe-4S-S-AdoMet</note>
    </ligand>
</feature>
<proteinExistence type="inferred from homology"/>
<comment type="function">
    <text evidence="1">Catalyzes the methylthiolation of N6-(dimethylallyl)adenosine (i(6)A), leading to the formation of 2-methylthio-N6-(dimethylallyl)adenosine (ms(2)i(6)A) at position 37 in tRNAs that read codons beginning with uridine.</text>
</comment>
<comment type="catalytic activity">
    <reaction evidence="1">
        <text>N(6)-dimethylallyladenosine(37) in tRNA + (sulfur carrier)-SH + AH2 + 2 S-adenosyl-L-methionine = 2-methylsulfanyl-N(6)-dimethylallyladenosine(37) in tRNA + (sulfur carrier)-H + 5'-deoxyadenosine + L-methionine + A + S-adenosyl-L-homocysteine + 2 H(+)</text>
        <dbReference type="Rhea" id="RHEA:37067"/>
        <dbReference type="Rhea" id="RHEA-COMP:10375"/>
        <dbReference type="Rhea" id="RHEA-COMP:10376"/>
        <dbReference type="Rhea" id="RHEA-COMP:14737"/>
        <dbReference type="Rhea" id="RHEA-COMP:14739"/>
        <dbReference type="ChEBI" id="CHEBI:13193"/>
        <dbReference type="ChEBI" id="CHEBI:15378"/>
        <dbReference type="ChEBI" id="CHEBI:17319"/>
        <dbReference type="ChEBI" id="CHEBI:17499"/>
        <dbReference type="ChEBI" id="CHEBI:29917"/>
        <dbReference type="ChEBI" id="CHEBI:57844"/>
        <dbReference type="ChEBI" id="CHEBI:57856"/>
        <dbReference type="ChEBI" id="CHEBI:59789"/>
        <dbReference type="ChEBI" id="CHEBI:64428"/>
        <dbReference type="ChEBI" id="CHEBI:74415"/>
        <dbReference type="ChEBI" id="CHEBI:74417"/>
        <dbReference type="EC" id="2.8.4.3"/>
    </reaction>
</comment>
<comment type="cofactor">
    <cofactor evidence="1">
        <name>[4Fe-4S] cluster</name>
        <dbReference type="ChEBI" id="CHEBI:49883"/>
    </cofactor>
    <text evidence="1">Binds 2 [4Fe-4S] clusters. One cluster is coordinated with 3 cysteines and an exchangeable S-adenosyl-L-methionine.</text>
</comment>
<comment type="subunit">
    <text evidence="1">Monomer.</text>
</comment>
<comment type="subcellular location">
    <subcellularLocation>
        <location evidence="1">Cytoplasm</location>
    </subcellularLocation>
</comment>
<comment type="similarity">
    <text evidence="1">Belongs to the methylthiotransferase family. MiaB subfamily.</text>
</comment>
<evidence type="ECO:0000255" key="1">
    <source>
        <dbReference type="HAMAP-Rule" id="MF_01864"/>
    </source>
</evidence>
<evidence type="ECO:0000255" key="2">
    <source>
        <dbReference type="PROSITE-ProRule" id="PRU01266"/>
    </source>
</evidence>
<reference key="1">
    <citation type="journal article" date="2005" name="Nucleic Acids Res.">
        <title>Genomic blueprint of Hahella chejuensis, a marine microbe producing an algicidal agent.</title>
        <authorList>
            <person name="Jeong H."/>
            <person name="Yim J.H."/>
            <person name="Lee C."/>
            <person name="Choi S.-H."/>
            <person name="Park Y.K."/>
            <person name="Yoon S.H."/>
            <person name="Hur C.-G."/>
            <person name="Kang H.-Y."/>
            <person name="Kim D."/>
            <person name="Lee H.H."/>
            <person name="Park K.H."/>
            <person name="Park S.-H."/>
            <person name="Park H.-S."/>
            <person name="Lee H.K."/>
            <person name="Oh T.K."/>
            <person name="Kim J.F."/>
        </authorList>
    </citation>
    <scope>NUCLEOTIDE SEQUENCE [LARGE SCALE GENOMIC DNA]</scope>
    <source>
        <strain>KCTC 2396</strain>
    </source>
</reference>
<name>MIAB_HAHCH</name>
<keyword id="KW-0004">4Fe-4S</keyword>
<keyword id="KW-0963">Cytoplasm</keyword>
<keyword id="KW-0408">Iron</keyword>
<keyword id="KW-0411">Iron-sulfur</keyword>
<keyword id="KW-0479">Metal-binding</keyword>
<keyword id="KW-1185">Reference proteome</keyword>
<keyword id="KW-0949">S-adenosyl-L-methionine</keyword>
<keyword id="KW-0808">Transferase</keyword>
<keyword id="KW-0819">tRNA processing</keyword>
<dbReference type="EC" id="2.8.4.3" evidence="1"/>
<dbReference type="EMBL" id="CP000155">
    <property type="protein sequence ID" value="ABC32020.1"/>
    <property type="molecule type" value="Genomic_DNA"/>
</dbReference>
<dbReference type="RefSeq" id="WP_011399084.1">
    <property type="nucleotide sequence ID" value="NC_007645.1"/>
</dbReference>
<dbReference type="SMR" id="Q2SBF4"/>
<dbReference type="STRING" id="349521.HCH_05348"/>
<dbReference type="KEGG" id="hch:HCH_05348"/>
<dbReference type="eggNOG" id="COG0621">
    <property type="taxonomic scope" value="Bacteria"/>
</dbReference>
<dbReference type="HOGENOM" id="CLU_018697_2_0_6"/>
<dbReference type="OrthoDB" id="9805215at2"/>
<dbReference type="Proteomes" id="UP000000238">
    <property type="component" value="Chromosome"/>
</dbReference>
<dbReference type="GO" id="GO:0005829">
    <property type="term" value="C:cytosol"/>
    <property type="evidence" value="ECO:0007669"/>
    <property type="project" value="TreeGrafter"/>
</dbReference>
<dbReference type="GO" id="GO:0051539">
    <property type="term" value="F:4 iron, 4 sulfur cluster binding"/>
    <property type="evidence" value="ECO:0007669"/>
    <property type="project" value="UniProtKB-UniRule"/>
</dbReference>
<dbReference type="GO" id="GO:0046872">
    <property type="term" value="F:metal ion binding"/>
    <property type="evidence" value="ECO:0007669"/>
    <property type="project" value="UniProtKB-KW"/>
</dbReference>
<dbReference type="GO" id="GO:0035597">
    <property type="term" value="F:N6-isopentenyladenosine methylthiotransferase activity"/>
    <property type="evidence" value="ECO:0007669"/>
    <property type="project" value="TreeGrafter"/>
</dbReference>
<dbReference type="CDD" id="cd01335">
    <property type="entry name" value="Radical_SAM"/>
    <property type="match status" value="1"/>
</dbReference>
<dbReference type="FunFam" id="3.40.50.12160:FF:000001">
    <property type="entry name" value="tRNA-2-methylthio-N(6)-dimethylallyladenosine synthase"/>
    <property type="match status" value="1"/>
</dbReference>
<dbReference type="FunFam" id="3.80.30.20:FF:000001">
    <property type="entry name" value="tRNA-2-methylthio-N(6)-dimethylallyladenosine synthase 2"/>
    <property type="match status" value="1"/>
</dbReference>
<dbReference type="Gene3D" id="3.40.50.12160">
    <property type="entry name" value="Methylthiotransferase, N-terminal domain"/>
    <property type="match status" value="1"/>
</dbReference>
<dbReference type="Gene3D" id="3.80.30.20">
    <property type="entry name" value="tm_1862 like domain"/>
    <property type="match status" value="1"/>
</dbReference>
<dbReference type="HAMAP" id="MF_01864">
    <property type="entry name" value="tRNA_metthiotr_MiaB"/>
    <property type="match status" value="1"/>
</dbReference>
<dbReference type="InterPro" id="IPR006638">
    <property type="entry name" value="Elp3/MiaA/NifB-like_rSAM"/>
</dbReference>
<dbReference type="InterPro" id="IPR005839">
    <property type="entry name" value="Methylthiotransferase"/>
</dbReference>
<dbReference type="InterPro" id="IPR020612">
    <property type="entry name" value="Methylthiotransferase_CS"/>
</dbReference>
<dbReference type="InterPro" id="IPR013848">
    <property type="entry name" value="Methylthiotransferase_N"/>
</dbReference>
<dbReference type="InterPro" id="IPR038135">
    <property type="entry name" value="Methylthiotransferase_N_sf"/>
</dbReference>
<dbReference type="InterPro" id="IPR006463">
    <property type="entry name" value="MiaB_methiolase"/>
</dbReference>
<dbReference type="InterPro" id="IPR007197">
    <property type="entry name" value="rSAM"/>
</dbReference>
<dbReference type="InterPro" id="IPR023404">
    <property type="entry name" value="rSAM_horseshoe"/>
</dbReference>
<dbReference type="InterPro" id="IPR002792">
    <property type="entry name" value="TRAM_dom"/>
</dbReference>
<dbReference type="NCBIfam" id="TIGR01574">
    <property type="entry name" value="miaB-methiolase"/>
    <property type="match status" value="1"/>
</dbReference>
<dbReference type="NCBIfam" id="TIGR00089">
    <property type="entry name" value="MiaB/RimO family radical SAM methylthiotransferase"/>
    <property type="match status" value="1"/>
</dbReference>
<dbReference type="PANTHER" id="PTHR43020">
    <property type="entry name" value="CDK5 REGULATORY SUBUNIT-ASSOCIATED PROTEIN 1"/>
    <property type="match status" value="1"/>
</dbReference>
<dbReference type="PANTHER" id="PTHR43020:SF2">
    <property type="entry name" value="MITOCHONDRIAL TRNA METHYLTHIOTRANSFERASE CDK5RAP1"/>
    <property type="match status" value="1"/>
</dbReference>
<dbReference type="Pfam" id="PF04055">
    <property type="entry name" value="Radical_SAM"/>
    <property type="match status" value="1"/>
</dbReference>
<dbReference type="Pfam" id="PF01938">
    <property type="entry name" value="TRAM"/>
    <property type="match status" value="1"/>
</dbReference>
<dbReference type="Pfam" id="PF00919">
    <property type="entry name" value="UPF0004"/>
    <property type="match status" value="1"/>
</dbReference>
<dbReference type="SFLD" id="SFLDF00273">
    <property type="entry name" value="(dimethylallyl)adenosine_tRNA"/>
    <property type="match status" value="1"/>
</dbReference>
<dbReference type="SFLD" id="SFLDG01082">
    <property type="entry name" value="B12-binding_domain_containing"/>
    <property type="match status" value="1"/>
</dbReference>
<dbReference type="SFLD" id="SFLDG01061">
    <property type="entry name" value="methylthiotransferase"/>
    <property type="match status" value="1"/>
</dbReference>
<dbReference type="SMART" id="SM00729">
    <property type="entry name" value="Elp3"/>
    <property type="match status" value="1"/>
</dbReference>
<dbReference type="SUPFAM" id="SSF102114">
    <property type="entry name" value="Radical SAM enzymes"/>
    <property type="match status" value="1"/>
</dbReference>
<dbReference type="PROSITE" id="PS51449">
    <property type="entry name" value="MTTASE_N"/>
    <property type="match status" value="1"/>
</dbReference>
<dbReference type="PROSITE" id="PS01278">
    <property type="entry name" value="MTTASE_RADICAL"/>
    <property type="match status" value="1"/>
</dbReference>
<dbReference type="PROSITE" id="PS51918">
    <property type="entry name" value="RADICAL_SAM"/>
    <property type="match status" value="1"/>
</dbReference>
<dbReference type="PROSITE" id="PS50926">
    <property type="entry name" value="TRAM"/>
    <property type="match status" value="1"/>
</dbReference>
<accession>Q2SBF4</accession>
<organism>
    <name type="scientific">Hahella chejuensis (strain KCTC 2396)</name>
    <dbReference type="NCBI Taxonomy" id="349521"/>
    <lineage>
        <taxon>Bacteria</taxon>
        <taxon>Pseudomonadati</taxon>
        <taxon>Pseudomonadota</taxon>
        <taxon>Gammaproteobacteria</taxon>
        <taxon>Oceanospirillales</taxon>
        <taxon>Hahellaceae</taxon>
        <taxon>Hahella</taxon>
    </lineage>
</organism>
<protein>
    <recommendedName>
        <fullName evidence="1">tRNA-2-methylthio-N(6)-dimethylallyladenosine synthase</fullName>
        <ecNumber evidence="1">2.8.4.3</ecNumber>
    </recommendedName>
    <alternativeName>
        <fullName evidence="1">(Dimethylallyl)adenosine tRNA methylthiotransferase MiaB</fullName>
    </alternativeName>
    <alternativeName>
        <fullName evidence="1">tRNA-i(6)A37 methylthiotransferase</fullName>
    </alternativeName>
</protein>
<sequence length="446" mass="49802">MAQKLFIKTYGCQMNEYDSSRMADLLGESHSVELTDNPDEADILLLNTCSIREKAQEKVFHQLGRWKTLKEKNPNLLIGVGGCVASQEGDAIRDRAPYVDMVFGPQTLHRLPEMVNSVAHQKIPMVDVTFPEIEKFDRLPMPSSEGASAFVSIMEGCSKYCTFCVVPYTRGEEVSRPVDDVIAEIAHLAGQGVREVNLLGQNVNAYRGLTHDGDYMDLAELITYVASVDGIDRIRYTTSHPVEFSDSLIDVYASVPKLVSHLHLPVQSGSDRILNLMKRGHTVAEYTDKLRRLQEIRPDISLSSDFIVGFPGETDADFEETMNLINEIGFDHSFSFVYSARPGTPAANLEDNVSEEAKKQRLAILQQRILQFAQDISRKMVGSTQRILVTGVSKKDPGELQGRTENNRVVNFRSDSHDIIGRFVDVTITAALPNSLRGERVDSLDY</sequence>